<accession>A1TZ94</accession>
<feature type="chain" id="PRO_1000023400" description="Translational regulator CsrA">
    <location>
        <begin position="1"/>
        <end position="65"/>
    </location>
</feature>
<evidence type="ECO:0000255" key="1">
    <source>
        <dbReference type="HAMAP-Rule" id="MF_00167"/>
    </source>
</evidence>
<keyword id="KW-0010">Activator</keyword>
<keyword id="KW-0963">Cytoplasm</keyword>
<keyword id="KW-0678">Repressor</keyword>
<keyword id="KW-0694">RNA-binding</keyword>
<keyword id="KW-0810">Translation regulation</keyword>
<protein>
    <recommendedName>
        <fullName evidence="1">Translational regulator CsrA</fullName>
    </recommendedName>
    <alternativeName>
        <fullName evidence="1">Carbon storage regulator</fullName>
    </alternativeName>
</protein>
<name>CSRA_MARN8</name>
<dbReference type="EMBL" id="CP000514">
    <property type="protein sequence ID" value="ABM18063.1"/>
    <property type="molecule type" value="Genomic_DNA"/>
</dbReference>
<dbReference type="RefSeq" id="WP_011784483.1">
    <property type="nucleotide sequence ID" value="NC_008740.1"/>
</dbReference>
<dbReference type="SMR" id="A1TZ94"/>
<dbReference type="STRING" id="351348.Maqu_0967"/>
<dbReference type="GeneID" id="31821719"/>
<dbReference type="KEGG" id="maq:Maqu_0967"/>
<dbReference type="eggNOG" id="COG1551">
    <property type="taxonomic scope" value="Bacteria"/>
</dbReference>
<dbReference type="HOGENOM" id="CLU_164837_2_1_6"/>
<dbReference type="OrthoDB" id="9809061at2"/>
<dbReference type="Proteomes" id="UP000000998">
    <property type="component" value="Chromosome"/>
</dbReference>
<dbReference type="GO" id="GO:0005829">
    <property type="term" value="C:cytosol"/>
    <property type="evidence" value="ECO:0007669"/>
    <property type="project" value="TreeGrafter"/>
</dbReference>
<dbReference type="GO" id="GO:0048027">
    <property type="term" value="F:mRNA 5'-UTR binding"/>
    <property type="evidence" value="ECO:0007669"/>
    <property type="project" value="UniProtKB-UniRule"/>
</dbReference>
<dbReference type="GO" id="GO:0006402">
    <property type="term" value="P:mRNA catabolic process"/>
    <property type="evidence" value="ECO:0007669"/>
    <property type="project" value="InterPro"/>
</dbReference>
<dbReference type="GO" id="GO:0045947">
    <property type="term" value="P:negative regulation of translational initiation"/>
    <property type="evidence" value="ECO:0007669"/>
    <property type="project" value="UniProtKB-UniRule"/>
</dbReference>
<dbReference type="GO" id="GO:0045948">
    <property type="term" value="P:positive regulation of translational initiation"/>
    <property type="evidence" value="ECO:0007669"/>
    <property type="project" value="UniProtKB-UniRule"/>
</dbReference>
<dbReference type="GO" id="GO:0006109">
    <property type="term" value="P:regulation of carbohydrate metabolic process"/>
    <property type="evidence" value="ECO:0007669"/>
    <property type="project" value="UniProtKB-UniRule"/>
</dbReference>
<dbReference type="FunFam" id="2.60.40.4380:FF:000001">
    <property type="entry name" value="Translational regulator CsrA"/>
    <property type="match status" value="1"/>
</dbReference>
<dbReference type="Gene3D" id="2.60.40.4380">
    <property type="entry name" value="Translational regulator CsrA"/>
    <property type="match status" value="1"/>
</dbReference>
<dbReference type="HAMAP" id="MF_00167">
    <property type="entry name" value="CsrA"/>
    <property type="match status" value="1"/>
</dbReference>
<dbReference type="InterPro" id="IPR003751">
    <property type="entry name" value="CsrA"/>
</dbReference>
<dbReference type="InterPro" id="IPR036107">
    <property type="entry name" value="CsrA_sf"/>
</dbReference>
<dbReference type="NCBIfam" id="TIGR00202">
    <property type="entry name" value="csrA"/>
    <property type="match status" value="1"/>
</dbReference>
<dbReference type="NCBIfam" id="NF002469">
    <property type="entry name" value="PRK01712.1"/>
    <property type="match status" value="1"/>
</dbReference>
<dbReference type="PANTHER" id="PTHR34984">
    <property type="entry name" value="CARBON STORAGE REGULATOR"/>
    <property type="match status" value="1"/>
</dbReference>
<dbReference type="PANTHER" id="PTHR34984:SF1">
    <property type="entry name" value="CARBON STORAGE REGULATOR"/>
    <property type="match status" value="1"/>
</dbReference>
<dbReference type="Pfam" id="PF02599">
    <property type="entry name" value="CsrA"/>
    <property type="match status" value="1"/>
</dbReference>
<dbReference type="SUPFAM" id="SSF117130">
    <property type="entry name" value="CsrA-like"/>
    <property type="match status" value="1"/>
</dbReference>
<sequence>MLILTRRVGETLMIGDEITVTVLGVKGNQVRIGVNAPKDVAVHREEIYQRIQSEKGSEEPESGNR</sequence>
<organism>
    <name type="scientific">Marinobacter nauticus (strain ATCC 700491 / DSM 11845 / VT8)</name>
    <name type="common">Marinobacter aquaeolei</name>
    <dbReference type="NCBI Taxonomy" id="351348"/>
    <lineage>
        <taxon>Bacteria</taxon>
        <taxon>Pseudomonadati</taxon>
        <taxon>Pseudomonadota</taxon>
        <taxon>Gammaproteobacteria</taxon>
        <taxon>Pseudomonadales</taxon>
        <taxon>Marinobacteraceae</taxon>
        <taxon>Marinobacter</taxon>
    </lineage>
</organism>
<proteinExistence type="inferred from homology"/>
<reference key="1">
    <citation type="journal article" date="2011" name="Appl. Environ. Microbiol.">
        <title>Genomic potential of Marinobacter aquaeolei, a biogeochemical 'opportunitroph'.</title>
        <authorList>
            <person name="Singer E."/>
            <person name="Webb E.A."/>
            <person name="Nelson W.C."/>
            <person name="Heidelberg J.F."/>
            <person name="Ivanova N."/>
            <person name="Pati A."/>
            <person name="Edwards K.J."/>
        </authorList>
    </citation>
    <scope>NUCLEOTIDE SEQUENCE [LARGE SCALE GENOMIC DNA]</scope>
    <source>
        <strain>ATCC 700491 / DSM 11845 / VT8</strain>
    </source>
</reference>
<comment type="function">
    <text evidence="1">A key translational regulator that binds mRNA to regulate translation initiation and/or mRNA stability. Mediates global changes in gene expression, shifting from rapid growth to stress survival by linking envelope stress, the stringent response and the catabolite repression systems. Usually binds in the 5'-UTR; binding at or near the Shine-Dalgarno sequence prevents ribosome-binding, repressing translation, binding elsewhere in the 5'-UTR can activate translation and/or stabilize the mRNA. Its function is antagonized by small RNA(s).</text>
</comment>
<comment type="subunit">
    <text evidence="1">Homodimer; the beta-strands of each monomer intercalate to form a hydrophobic core, while the alpha-helices form wings that extend away from the core.</text>
</comment>
<comment type="subcellular location">
    <subcellularLocation>
        <location evidence="1">Cytoplasm</location>
    </subcellularLocation>
</comment>
<comment type="similarity">
    <text evidence="1">Belongs to the CsrA/RsmA family.</text>
</comment>
<gene>
    <name evidence="1" type="primary">csrA</name>
    <name type="ordered locus">Maqu_0967</name>
</gene>